<keyword id="KW-0050">Antiport</keyword>
<keyword id="KW-0330">Glyoxysome</keyword>
<keyword id="KW-0472">Membrane</keyword>
<keyword id="KW-0576">Peroxisome</keyword>
<keyword id="KW-1185">Reference proteome</keyword>
<keyword id="KW-0677">Repeat</keyword>
<keyword id="KW-0812">Transmembrane</keyword>
<keyword id="KW-1133">Transmembrane helix</keyword>
<keyword id="KW-0813">Transport</keyword>
<sequence>MSDALINGLAGAGGGIIAQLLTYPLQTVNTRQQTERDLKREKRKLGTIEHMCQVVKQEGWERLYGGLAPSLAGTAASQGVYYYFYQVFRNRAEATALARKKKGLGDGSVGMFASLLVAAFAGSVNVLMTNPIWVIVTRMQTHRKMTKDQTAAPESPSSNAEALVAVEPRPYGTFNTIREVYDEAGITGFWKGVIPTLIMVSNPSMQFMLYETMLTKLKKKRALKGSNNVTALETFLLGAVAKLGATVTTYPLLVVKSRLQAKQVTTGDKRQQYKGTLDAILKMIRYEGLYGFYKGMSTKIVQSVLAAAVLFMIKEELVKGAKLLLSNATSS</sequence>
<proteinExistence type="evidence at protein level"/>
<protein>
    <recommendedName>
        <fullName>Peroxisomal nicotinamide adenine dinucleotide carrier</fullName>
    </recommendedName>
    <alternativeName>
        <fullName>Peroxisomal NAD carrier</fullName>
    </alternativeName>
    <alternativeName>
        <fullName>Peroxisomal membrane protein 38, (PMP36)</fullName>
        <shortName>AtPMP38</shortName>
    </alternativeName>
    <alternativeName>
        <fullName>Protein ABERRANT PEROXISOME MORPHOLOGY 3</fullName>
    </alternativeName>
    <alternativeName>
        <fullName>Solute carrier family 25 member 17</fullName>
    </alternativeName>
</protein>
<name>PXN_ARATH</name>
<feature type="chain" id="PRO_0000420694" description="Peroxisomal nicotinamide adenine dinucleotide carrier">
    <location>
        <begin position="1"/>
        <end position="331"/>
    </location>
</feature>
<feature type="transmembrane region" description="Helical; Name=1" evidence="1">
    <location>
        <begin position="5"/>
        <end position="25"/>
    </location>
</feature>
<feature type="transmembrane region" description="Helical; Name=2" evidence="1">
    <location>
        <begin position="63"/>
        <end position="85"/>
    </location>
</feature>
<feature type="transmembrane region" description="Helical; Name=3" evidence="1">
    <location>
        <begin position="116"/>
        <end position="136"/>
    </location>
</feature>
<feature type="transmembrane region" description="Helical; Name=4" evidence="1">
    <location>
        <begin position="180"/>
        <end position="200"/>
    </location>
</feature>
<feature type="transmembrane region" description="Helical; Name=5" evidence="1">
    <location>
        <begin position="235"/>
        <end position="255"/>
    </location>
</feature>
<feature type="transmembrane region" description="Helical; Name=6" evidence="1">
    <location>
        <begin position="293"/>
        <end position="313"/>
    </location>
</feature>
<feature type="repeat" description="Solcar 1">
    <location>
        <begin position="2"/>
        <end position="91"/>
    </location>
</feature>
<feature type="repeat" description="Solcar 2">
    <location>
        <begin position="109"/>
        <end position="216"/>
    </location>
</feature>
<feature type="repeat" description="Solcar 3">
    <location>
        <begin position="229"/>
        <end position="320"/>
    </location>
</feature>
<feature type="sequence conflict" description="In Ref. 5; AAM65850." evidence="7" ref="5">
    <original>S</original>
    <variation>I</variation>
    <location>
        <position position="331"/>
    </location>
</feature>
<dbReference type="EMBL" id="AB047148">
    <property type="protein sequence ID" value="BAB62814.1"/>
    <property type="molecule type" value="mRNA"/>
</dbReference>
<dbReference type="EMBL" id="AF002109">
    <property type="protein sequence ID" value="AAB95282.1"/>
    <property type="molecule type" value="Genomic_DNA"/>
</dbReference>
<dbReference type="EMBL" id="CP002685">
    <property type="protein sequence ID" value="AEC09757.1"/>
    <property type="molecule type" value="Genomic_DNA"/>
</dbReference>
<dbReference type="EMBL" id="AY039858">
    <property type="protein sequence ID" value="AAK63962.1"/>
    <property type="molecule type" value="mRNA"/>
</dbReference>
<dbReference type="EMBL" id="BT003020">
    <property type="protein sequence ID" value="AAO23585.1"/>
    <property type="molecule type" value="mRNA"/>
</dbReference>
<dbReference type="EMBL" id="AY088311">
    <property type="protein sequence ID" value="AAM65850.1"/>
    <property type="molecule type" value="mRNA"/>
</dbReference>
<dbReference type="PIR" id="F84823">
    <property type="entry name" value="F84823"/>
</dbReference>
<dbReference type="RefSeq" id="NP_181526.1">
    <property type="nucleotide sequence ID" value="NM_129555.4"/>
</dbReference>
<dbReference type="SMR" id="O04200"/>
<dbReference type="BioGRID" id="3922">
    <property type="interactions" value="1"/>
</dbReference>
<dbReference type="FunCoup" id="O04200">
    <property type="interactions" value="3172"/>
</dbReference>
<dbReference type="STRING" id="3702.O04200"/>
<dbReference type="TCDB" id="2.A.29.6.2">
    <property type="family name" value="the mitochondrial carrier (mc) family"/>
</dbReference>
<dbReference type="iPTMnet" id="O04200"/>
<dbReference type="PaxDb" id="3702-AT2G39970.1"/>
<dbReference type="ProMEX" id="O04200"/>
<dbReference type="ProteomicsDB" id="226132"/>
<dbReference type="EnsemblPlants" id="AT2G39970.1">
    <property type="protein sequence ID" value="AT2G39970.1"/>
    <property type="gene ID" value="AT2G39970"/>
</dbReference>
<dbReference type="GeneID" id="818584"/>
<dbReference type="Gramene" id="AT2G39970.1">
    <property type="protein sequence ID" value="AT2G39970.1"/>
    <property type="gene ID" value="AT2G39970"/>
</dbReference>
<dbReference type="KEGG" id="ath:AT2G39970"/>
<dbReference type="Araport" id="AT2G39970"/>
<dbReference type="TAIR" id="AT2G39970">
    <property type="gene designation" value="PXN"/>
</dbReference>
<dbReference type="eggNOG" id="KOG0769">
    <property type="taxonomic scope" value="Eukaryota"/>
</dbReference>
<dbReference type="HOGENOM" id="CLU_015166_6_3_1"/>
<dbReference type="InParanoid" id="O04200"/>
<dbReference type="OMA" id="QFMMYEL"/>
<dbReference type="OrthoDB" id="2019556at2759"/>
<dbReference type="PhylomeDB" id="O04200"/>
<dbReference type="PRO" id="PR:O04200"/>
<dbReference type="Proteomes" id="UP000006548">
    <property type="component" value="Chromosome 2"/>
</dbReference>
<dbReference type="ExpressionAtlas" id="O04200">
    <property type="expression patterns" value="baseline and differential"/>
</dbReference>
<dbReference type="GO" id="GO:0046861">
    <property type="term" value="C:glyoxysomal membrane"/>
    <property type="evidence" value="ECO:0007669"/>
    <property type="project" value="UniProtKB-SubCell"/>
</dbReference>
<dbReference type="GO" id="GO:0005777">
    <property type="term" value="C:peroxisome"/>
    <property type="evidence" value="ECO:0000314"/>
    <property type="project" value="TAIR"/>
</dbReference>
<dbReference type="GO" id="GO:0000325">
    <property type="term" value="C:plant-type vacuole"/>
    <property type="evidence" value="ECO:0007005"/>
    <property type="project" value="TAIR"/>
</dbReference>
<dbReference type="GO" id="GO:0015297">
    <property type="term" value="F:antiporter activity"/>
    <property type="evidence" value="ECO:0007669"/>
    <property type="project" value="UniProtKB-KW"/>
</dbReference>
<dbReference type="GO" id="GO:0043132">
    <property type="term" value="P:NAD transport"/>
    <property type="evidence" value="ECO:0000315"/>
    <property type="project" value="TAIR"/>
</dbReference>
<dbReference type="GO" id="GO:0044375">
    <property type="term" value="P:regulation of peroxisome size"/>
    <property type="evidence" value="ECO:0000315"/>
    <property type="project" value="TAIR"/>
</dbReference>
<dbReference type="FunFam" id="1.50.40.10:FF:000204">
    <property type="entry name" value="Peroxisomal nicotinamide adenine dinucleotide carrier"/>
    <property type="match status" value="1"/>
</dbReference>
<dbReference type="Gene3D" id="1.50.40.10">
    <property type="entry name" value="Mitochondrial carrier domain"/>
    <property type="match status" value="1"/>
</dbReference>
<dbReference type="InterPro" id="IPR018108">
    <property type="entry name" value="Mitochondrial_sb/sol_carrier"/>
</dbReference>
<dbReference type="InterPro" id="IPR023395">
    <property type="entry name" value="Mt_carrier_dom_sf"/>
</dbReference>
<dbReference type="InterPro" id="IPR044712">
    <property type="entry name" value="SLC25A32-like"/>
</dbReference>
<dbReference type="PANTHER" id="PTHR45683">
    <property type="entry name" value="MITOCHONDRIAL NICOTINAMIDE ADENINE DINUCLEOTIDE TRANSPORTER 1-RELATED-RELATED"/>
    <property type="match status" value="1"/>
</dbReference>
<dbReference type="Pfam" id="PF00153">
    <property type="entry name" value="Mito_carr"/>
    <property type="match status" value="3"/>
</dbReference>
<dbReference type="SUPFAM" id="SSF103506">
    <property type="entry name" value="Mitochondrial carrier"/>
    <property type="match status" value="1"/>
</dbReference>
<dbReference type="PROSITE" id="PS50920">
    <property type="entry name" value="SOLCAR"/>
    <property type="match status" value="3"/>
</dbReference>
<comment type="function">
    <text evidence="4 5 6">Mediates the NAD(+) import into peroxisomes. Favors the NAD(+)(in)/AMP(out) antiport exchange, but is also able to catalyze a low unidirectional transport that might be essential under special conditions. Transports CoA, dephospho-CoA, acetyl-CoA, adenosine 3',5'-diphosphate (PAP), NAD(+), AMP, ADP and NADH, but has no activity with ATP, GTP, GDP, NADPH, NADP(+) or FAD. Required for peroxisomes proliferation.</text>
</comment>
<comment type="activity regulation">
    <text evidence="6">Inhibited by pyridoxal 5'-phosphate, bathophenanthroline, tannic acid, mersalyl, mercuric chloride and bromocresol purple.</text>
</comment>
<comment type="biophysicochemical properties">
    <kinetics>
        <KM evidence="4 6">102 uM for the NAD(+)/NAD(+) exchange</KM>
        <KM evidence="4 6">119 uM for the AMP/AMP exchange</KM>
        <Vmax evidence="4 6">166.0 umol/min/g enzyme for the NAD(+)/NAD(+) exchange</Vmax>
        <Vmax evidence="4 6">416.0 umol/min/g enzyme for the AMP/AMP exchange</Vmax>
    </kinetics>
</comment>
<comment type="subunit">
    <text evidence="5">Homodimer.</text>
</comment>
<comment type="subcellular location">
    <subcellularLocation>
        <location evidence="2 3 4">Glyoxysome membrane</location>
        <topology evidence="2 3 4">Multi-pass membrane protein</topology>
    </subcellularLocation>
</comment>
<comment type="tissue specificity">
    <text evidence="4 5">Expressed in cotyledons, hypocotyls, vascular tissues, trichomes, hydathodes, seeds, pedicels, flowers and stigma.</text>
</comment>
<comment type="disruption phenotype">
    <text evidence="4 5">No germination or growth inhibition, but delayed storage oil mobilization. Decreased sensitivity to 4-(2,4-dichlorophenoxy)butanoic acid (2,4-DB), a precursor converted in vivo by beta-oxidation into the herbicide 2,4-dichlorophenoxyacetic acid (2,4-D). Enlarged peroxisomes.</text>
</comment>
<comment type="similarity">
    <text evidence="7">Belongs to the mitochondrial carrier (TC 2.A.29) family.</text>
</comment>
<comment type="caution">
    <text evidence="8">Was originally thought to be an adenine nucleotide carrier.</text>
</comment>
<evidence type="ECO:0000255" key="1"/>
<evidence type="ECO:0000269" key="2">
    <source>
    </source>
</evidence>
<evidence type="ECO:0000269" key="3">
    <source>
    </source>
</evidence>
<evidence type="ECO:0000269" key="4">
    <source>
    </source>
</evidence>
<evidence type="ECO:0000269" key="5">
    <source>
    </source>
</evidence>
<evidence type="ECO:0000269" key="6">
    <source>
    </source>
</evidence>
<evidence type="ECO:0000305" key="7"/>
<evidence type="ECO:0000305" key="8">
    <source>
    </source>
</evidence>
<gene>
    <name type="primary">PXN</name>
    <name type="synonym">APEM3</name>
    <name type="ordered locus">At2g39970</name>
    <name type="ORF">T28M21.13</name>
</gene>
<reference key="1">
    <citation type="journal article" date="2001" name="Plant Cell Physiol.">
        <title>Developmental analysis of a putative ATP/ADP carrier protein localized on glyoxysomal membranes during the peroxisome transition in pumpkin cotyledons.</title>
        <authorList>
            <person name="Fukao Y."/>
            <person name="Hayashi Y."/>
            <person name="Mano S."/>
            <person name="Hayashi M."/>
            <person name="Nishimura M."/>
        </authorList>
    </citation>
    <scope>NUCLEOTIDE SEQUENCE [MRNA]</scope>
    <scope>SUBCELLULAR LOCATION</scope>
</reference>
<reference key="2">
    <citation type="journal article" date="1999" name="Nature">
        <title>Sequence and analysis of chromosome 2 of the plant Arabidopsis thaliana.</title>
        <authorList>
            <person name="Lin X."/>
            <person name="Kaul S."/>
            <person name="Rounsley S.D."/>
            <person name="Shea T.P."/>
            <person name="Benito M.-I."/>
            <person name="Town C.D."/>
            <person name="Fujii C.Y."/>
            <person name="Mason T.M."/>
            <person name="Bowman C.L."/>
            <person name="Barnstead M.E."/>
            <person name="Feldblyum T.V."/>
            <person name="Buell C.R."/>
            <person name="Ketchum K.A."/>
            <person name="Lee J.J."/>
            <person name="Ronning C.M."/>
            <person name="Koo H.L."/>
            <person name="Moffat K.S."/>
            <person name="Cronin L.A."/>
            <person name="Shen M."/>
            <person name="Pai G."/>
            <person name="Van Aken S."/>
            <person name="Umayam L."/>
            <person name="Tallon L.J."/>
            <person name="Gill J.E."/>
            <person name="Adams M.D."/>
            <person name="Carrera A.J."/>
            <person name="Creasy T.H."/>
            <person name="Goodman H.M."/>
            <person name="Somerville C.R."/>
            <person name="Copenhaver G.P."/>
            <person name="Preuss D."/>
            <person name="Nierman W.C."/>
            <person name="White O."/>
            <person name="Eisen J.A."/>
            <person name="Salzberg S.L."/>
            <person name="Fraser C.M."/>
            <person name="Venter J.C."/>
        </authorList>
    </citation>
    <scope>NUCLEOTIDE SEQUENCE [LARGE SCALE GENOMIC DNA]</scope>
    <source>
        <strain>cv. Columbia</strain>
    </source>
</reference>
<reference key="3">
    <citation type="journal article" date="2017" name="Plant J.">
        <title>Araport11: a complete reannotation of the Arabidopsis thaliana reference genome.</title>
        <authorList>
            <person name="Cheng C.Y."/>
            <person name="Krishnakumar V."/>
            <person name="Chan A.P."/>
            <person name="Thibaud-Nissen F."/>
            <person name="Schobel S."/>
            <person name="Town C.D."/>
        </authorList>
    </citation>
    <scope>GENOME REANNOTATION</scope>
    <source>
        <strain>cv. Columbia</strain>
    </source>
</reference>
<reference key="4">
    <citation type="journal article" date="2003" name="Science">
        <title>Empirical analysis of transcriptional activity in the Arabidopsis genome.</title>
        <authorList>
            <person name="Yamada K."/>
            <person name="Lim J."/>
            <person name="Dale J.M."/>
            <person name="Chen H."/>
            <person name="Shinn P."/>
            <person name="Palm C.J."/>
            <person name="Southwick A.M."/>
            <person name="Wu H.C."/>
            <person name="Kim C.J."/>
            <person name="Nguyen M."/>
            <person name="Pham P.K."/>
            <person name="Cheuk R.F."/>
            <person name="Karlin-Newmann G."/>
            <person name="Liu S.X."/>
            <person name="Lam B."/>
            <person name="Sakano H."/>
            <person name="Wu T."/>
            <person name="Yu G."/>
            <person name="Miranda M."/>
            <person name="Quach H.L."/>
            <person name="Tripp M."/>
            <person name="Chang C.H."/>
            <person name="Lee J.M."/>
            <person name="Toriumi M.J."/>
            <person name="Chan M.M."/>
            <person name="Tang C.C."/>
            <person name="Onodera C.S."/>
            <person name="Deng J.M."/>
            <person name="Akiyama K."/>
            <person name="Ansari Y."/>
            <person name="Arakawa T."/>
            <person name="Banh J."/>
            <person name="Banno F."/>
            <person name="Bowser L."/>
            <person name="Brooks S.Y."/>
            <person name="Carninci P."/>
            <person name="Chao Q."/>
            <person name="Choy N."/>
            <person name="Enju A."/>
            <person name="Goldsmith A.D."/>
            <person name="Gurjal M."/>
            <person name="Hansen N.F."/>
            <person name="Hayashizaki Y."/>
            <person name="Johnson-Hopson C."/>
            <person name="Hsuan V.W."/>
            <person name="Iida K."/>
            <person name="Karnes M."/>
            <person name="Khan S."/>
            <person name="Koesema E."/>
            <person name="Ishida J."/>
            <person name="Jiang P.X."/>
            <person name="Jones T."/>
            <person name="Kawai J."/>
            <person name="Kamiya A."/>
            <person name="Meyers C."/>
            <person name="Nakajima M."/>
            <person name="Narusaka M."/>
            <person name="Seki M."/>
            <person name="Sakurai T."/>
            <person name="Satou M."/>
            <person name="Tamse R."/>
            <person name="Vaysberg M."/>
            <person name="Wallender E.K."/>
            <person name="Wong C."/>
            <person name="Yamamura Y."/>
            <person name="Yuan S."/>
            <person name="Shinozaki K."/>
            <person name="Davis R.W."/>
            <person name="Theologis A."/>
            <person name="Ecker J.R."/>
        </authorList>
    </citation>
    <scope>NUCLEOTIDE SEQUENCE [LARGE SCALE MRNA]</scope>
    <source>
        <strain>cv. Columbia</strain>
    </source>
</reference>
<reference key="5">
    <citation type="submission" date="2002-03" db="EMBL/GenBank/DDBJ databases">
        <title>Full-length cDNA from Arabidopsis thaliana.</title>
        <authorList>
            <person name="Brover V.V."/>
            <person name="Troukhan M.E."/>
            <person name="Alexandrov N.A."/>
            <person name="Lu Y.-P."/>
            <person name="Flavell R.B."/>
            <person name="Feldmann K.A."/>
        </authorList>
    </citation>
    <scope>NUCLEOTIDE SEQUENCE [LARGE SCALE MRNA]</scope>
</reference>
<reference key="6">
    <citation type="journal article" date="2008" name="Plant Cell">
        <title>Peroxisomal ATP import is essential for seedling development in Arabidopsis thaliana.</title>
        <authorList>
            <person name="Linka N."/>
            <person name="Theodoulou F.L."/>
            <person name="Haslam R.P."/>
            <person name="Linka M."/>
            <person name="Napier J.A."/>
            <person name="Neuhaus H.E."/>
            <person name="Weber A.P."/>
        </authorList>
    </citation>
    <scope>IDENTIFICATION</scope>
    <scope>SUBCELLULAR LOCATION</scope>
</reference>
<reference key="7">
    <citation type="journal article" date="2009" name="J. Proteomics">
        <title>Phosphoproteomic analysis of nuclei-enriched fractions from Arabidopsis thaliana.</title>
        <authorList>
            <person name="Jones A.M.E."/>
            <person name="MacLean D."/>
            <person name="Studholme D.J."/>
            <person name="Serna-Sanz A."/>
            <person name="Andreasson E."/>
            <person name="Rathjen J.P."/>
            <person name="Peck S.C."/>
        </authorList>
    </citation>
    <scope>IDENTIFICATION BY MASS SPECTROMETRY [LARGE SCALE ANALYSIS]</scope>
    <source>
        <strain>cv. Columbia</strain>
    </source>
</reference>
<reference key="8">
    <citation type="journal article" date="2011" name="Plant Cell Physiol.">
        <title>A defect of peroxisomal membrane protein 38 causes enlargement of peroxisomes.</title>
        <authorList>
            <person name="Mano S."/>
            <person name="Nakamori C."/>
            <person name="Fukao Y."/>
            <person name="Araki M."/>
            <person name="Matsuda A."/>
            <person name="Kondo M."/>
            <person name="Nishimura M."/>
        </authorList>
    </citation>
    <scope>FUNCTION</scope>
    <scope>DISRUPTION PHENOTYPE</scope>
    <scope>SUBUNIT</scope>
    <scope>TISSUE SPECIFICITY</scope>
</reference>
<reference key="9">
    <citation type="journal article" date="2012" name="J. Bioenerg. Biomembr.">
        <title>The peroxisomal NAD+ carrier of Arabidopsis thaliana transports coenzyme A and its derivatives.</title>
        <authorList>
            <person name="Agrimi G."/>
            <person name="Russo A."/>
            <person name="Pierri C.L."/>
            <person name="Palmieri F."/>
        </authorList>
    </citation>
    <scope>FUNCTION</scope>
    <scope>SUBSTRATE SPECIFICITY</scope>
    <scope>ACTIVITY REGULATION</scope>
    <scope>BIOPHYSICOCHEMICAL PROPERTIES</scope>
</reference>
<reference key="10">
    <citation type="journal article" date="2012" name="Plant J.">
        <title>A peroxisomal carrier delivers NAD? and contributes to optimal fatty acid degradation during storage oil mobilization.</title>
        <authorList>
            <person name="Bernhardt K."/>
            <person name="Wilkinson S."/>
            <person name="Weber A.P."/>
            <person name="Linka N."/>
        </authorList>
    </citation>
    <scope>FUNCTION</scope>
    <scope>SUBCELLULAR LOCATION</scope>
    <scope>BIOPHYSICOCHEMICAL PROPERTIES</scope>
    <scope>TISSUE SPECIFICITY</scope>
    <scope>DISRUPTION PHENOTYPE</scope>
</reference>
<accession>O04200</accession>
<accession>Q8L9P5</accession>
<organism>
    <name type="scientific">Arabidopsis thaliana</name>
    <name type="common">Mouse-ear cress</name>
    <dbReference type="NCBI Taxonomy" id="3702"/>
    <lineage>
        <taxon>Eukaryota</taxon>
        <taxon>Viridiplantae</taxon>
        <taxon>Streptophyta</taxon>
        <taxon>Embryophyta</taxon>
        <taxon>Tracheophyta</taxon>
        <taxon>Spermatophyta</taxon>
        <taxon>Magnoliopsida</taxon>
        <taxon>eudicotyledons</taxon>
        <taxon>Gunneridae</taxon>
        <taxon>Pentapetalae</taxon>
        <taxon>rosids</taxon>
        <taxon>malvids</taxon>
        <taxon>Brassicales</taxon>
        <taxon>Brassicaceae</taxon>
        <taxon>Camelineae</taxon>
        <taxon>Arabidopsis</taxon>
    </lineage>
</organism>